<feature type="chain" id="PRO_1000200212" description="Probable ECA polymerase">
    <location>
        <begin position="1"/>
        <end position="452"/>
    </location>
</feature>
<feature type="transmembrane region" description="Helical" evidence="1">
    <location>
        <begin position="6"/>
        <end position="26"/>
    </location>
</feature>
<feature type="transmembrane region" description="Helical" evidence="1">
    <location>
        <begin position="37"/>
        <end position="57"/>
    </location>
</feature>
<feature type="transmembrane region" description="Helical" evidence="1">
    <location>
        <begin position="63"/>
        <end position="83"/>
    </location>
</feature>
<feature type="transmembrane region" description="Helical" evidence="1">
    <location>
        <begin position="118"/>
        <end position="138"/>
    </location>
</feature>
<feature type="transmembrane region" description="Helical" evidence="1">
    <location>
        <begin position="155"/>
        <end position="175"/>
    </location>
</feature>
<feature type="transmembrane region" description="Helical" evidence="1">
    <location>
        <begin position="181"/>
        <end position="201"/>
    </location>
</feature>
<feature type="transmembrane region" description="Helical" evidence="1">
    <location>
        <begin position="207"/>
        <end position="227"/>
    </location>
</feature>
<feature type="transmembrane region" description="Helical" evidence="1">
    <location>
        <begin position="228"/>
        <end position="248"/>
    </location>
</feature>
<feature type="transmembrane region" description="Helical" evidence="1">
    <location>
        <begin position="341"/>
        <end position="361"/>
    </location>
</feature>
<feature type="transmembrane region" description="Helical" evidence="1">
    <location>
        <begin position="378"/>
        <end position="398"/>
    </location>
</feature>
<feature type="transmembrane region" description="Helical" evidence="1">
    <location>
        <begin position="410"/>
        <end position="430"/>
    </location>
</feature>
<sequence>MSLMQFSGLLVVWLLSTLFIATLTWFEFRRVRFNFNVFFSLLFLLTFFFGFPLTSVLVFRFDVGVAPPEILLQALLSAACFYGVYYVTYKTRLRKRVVDVPRKPLFTMNRVETHLTWVILMGIALVSVAIFFMHNGFLLFRLHSYSQIFSSEVSGVALKRFFYFFIPAMLVVYFLRQDSKAWLFFLVSTVAFGLLTYMIVGGTRANIIIAFAIFLFIGIIRGWISLWMLVAAGVLGIVGMFWLALKRYGLNVSGDEAFYTFLYLTRDTFSPWENLALLLQNYHNIDFQGLAPIVRDFYVFIPTWLWPGRPSIVLNSANYFTWEVLNNHSGLAISPTLIGSLVVMGGALFIPLGAIVVGLIIKWFDWLYELGNREPNRYKAAILHSFCFGAIFNMIVLAREGLDSFVSRVVFFLVVFGASLLVAKLLFWLFDSAGLIHKRTTSLPQAQVEGKL</sequence>
<gene>
    <name evidence="1" type="primary">wzyE</name>
    <name type="ordered locus">SeAg_B4154</name>
</gene>
<dbReference type="EMBL" id="CP001138">
    <property type="protein sequence ID" value="ACH50550.1"/>
    <property type="molecule type" value="Genomic_DNA"/>
</dbReference>
<dbReference type="RefSeq" id="WP_000055611.1">
    <property type="nucleotide sequence ID" value="NC_011149.1"/>
</dbReference>
<dbReference type="KEGG" id="sea:SeAg_B4154"/>
<dbReference type="HOGENOM" id="CLU_049711_0_0_6"/>
<dbReference type="UniPathway" id="UPA00566"/>
<dbReference type="Proteomes" id="UP000008819">
    <property type="component" value="Chromosome"/>
</dbReference>
<dbReference type="GO" id="GO:0005886">
    <property type="term" value="C:plasma membrane"/>
    <property type="evidence" value="ECO:0007669"/>
    <property type="project" value="UniProtKB-SubCell"/>
</dbReference>
<dbReference type="GO" id="GO:0009246">
    <property type="term" value="P:enterobacterial common antigen biosynthetic process"/>
    <property type="evidence" value="ECO:0007669"/>
    <property type="project" value="UniProtKB-UniRule"/>
</dbReference>
<dbReference type="HAMAP" id="MF_01003">
    <property type="entry name" value="WzyE"/>
    <property type="match status" value="1"/>
</dbReference>
<dbReference type="InterPro" id="IPR010691">
    <property type="entry name" value="WzyE"/>
</dbReference>
<dbReference type="NCBIfam" id="NF002820">
    <property type="entry name" value="PRK02975.1"/>
    <property type="match status" value="1"/>
</dbReference>
<dbReference type="Pfam" id="PF06899">
    <property type="entry name" value="WzyE"/>
    <property type="match status" value="1"/>
</dbReference>
<proteinExistence type="inferred from homology"/>
<comment type="function">
    <text evidence="1">Probably involved in the polymerization of enterobacterial common antigen (ECA) trisaccharide repeat units.</text>
</comment>
<comment type="pathway">
    <text evidence="1">Bacterial outer membrane biogenesis; enterobacterial common antigen biosynthesis.</text>
</comment>
<comment type="subunit">
    <text evidence="1">Probably part of a complex composed of WzxE, WzyE and WzzE.</text>
</comment>
<comment type="subcellular location">
    <subcellularLocation>
        <location evidence="1">Cell inner membrane</location>
        <topology evidence="1">Multi-pass membrane protein</topology>
    </subcellularLocation>
</comment>
<comment type="similarity">
    <text evidence="1">Belongs to the WzyE family.</text>
</comment>
<keyword id="KW-0997">Cell inner membrane</keyword>
<keyword id="KW-1003">Cell membrane</keyword>
<keyword id="KW-0472">Membrane</keyword>
<keyword id="KW-0812">Transmembrane</keyword>
<keyword id="KW-1133">Transmembrane helix</keyword>
<accession>B5EZ53</accession>
<reference key="1">
    <citation type="journal article" date="2011" name="J. Bacteriol.">
        <title>Comparative genomics of 28 Salmonella enterica isolates: evidence for CRISPR-mediated adaptive sublineage evolution.</title>
        <authorList>
            <person name="Fricke W.F."/>
            <person name="Mammel M.K."/>
            <person name="McDermott P.F."/>
            <person name="Tartera C."/>
            <person name="White D.G."/>
            <person name="Leclerc J.E."/>
            <person name="Ravel J."/>
            <person name="Cebula T.A."/>
        </authorList>
    </citation>
    <scope>NUCLEOTIDE SEQUENCE [LARGE SCALE GENOMIC DNA]</scope>
    <source>
        <strain>SL483</strain>
    </source>
</reference>
<name>WZYE_SALA4</name>
<protein>
    <recommendedName>
        <fullName evidence="1">Probable ECA polymerase</fullName>
    </recommendedName>
</protein>
<evidence type="ECO:0000255" key="1">
    <source>
        <dbReference type="HAMAP-Rule" id="MF_01003"/>
    </source>
</evidence>
<organism>
    <name type="scientific">Salmonella agona (strain SL483)</name>
    <dbReference type="NCBI Taxonomy" id="454166"/>
    <lineage>
        <taxon>Bacteria</taxon>
        <taxon>Pseudomonadati</taxon>
        <taxon>Pseudomonadota</taxon>
        <taxon>Gammaproteobacteria</taxon>
        <taxon>Enterobacterales</taxon>
        <taxon>Enterobacteriaceae</taxon>
        <taxon>Salmonella</taxon>
    </lineage>
</organism>